<evidence type="ECO:0000255" key="1">
    <source>
        <dbReference type="HAMAP-Rule" id="MF_00480"/>
    </source>
</evidence>
<evidence type="ECO:0000305" key="2"/>
<dbReference type="EMBL" id="CP000814">
    <property type="protein sequence ID" value="ABV52053.1"/>
    <property type="molecule type" value="Genomic_DNA"/>
</dbReference>
<dbReference type="RefSeq" id="WP_002779471.1">
    <property type="nucleotide sequence ID" value="NC_009839.1"/>
</dbReference>
<dbReference type="SMR" id="A8FKR6"/>
<dbReference type="KEGG" id="cju:C8J_0454"/>
<dbReference type="HOGENOM" id="CLU_072226_1_1_7"/>
<dbReference type="GO" id="GO:0015935">
    <property type="term" value="C:small ribosomal subunit"/>
    <property type="evidence" value="ECO:0007669"/>
    <property type="project" value="InterPro"/>
</dbReference>
<dbReference type="GO" id="GO:0019843">
    <property type="term" value="F:rRNA binding"/>
    <property type="evidence" value="ECO:0007669"/>
    <property type="project" value="UniProtKB-UniRule"/>
</dbReference>
<dbReference type="GO" id="GO:0003735">
    <property type="term" value="F:structural constituent of ribosome"/>
    <property type="evidence" value="ECO:0007669"/>
    <property type="project" value="InterPro"/>
</dbReference>
<dbReference type="GO" id="GO:0000049">
    <property type="term" value="F:tRNA binding"/>
    <property type="evidence" value="ECO:0007669"/>
    <property type="project" value="UniProtKB-UniRule"/>
</dbReference>
<dbReference type="GO" id="GO:0006412">
    <property type="term" value="P:translation"/>
    <property type="evidence" value="ECO:0007669"/>
    <property type="project" value="UniProtKB-UniRule"/>
</dbReference>
<dbReference type="CDD" id="cd14869">
    <property type="entry name" value="uS7_Bacteria"/>
    <property type="match status" value="1"/>
</dbReference>
<dbReference type="FunFam" id="1.10.455.10:FF:000001">
    <property type="entry name" value="30S ribosomal protein S7"/>
    <property type="match status" value="1"/>
</dbReference>
<dbReference type="Gene3D" id="1.10.455.10">
    <property type="entry name" value="Ribosomal protein S7 domain"/>
    <property type="match status" value="1"/>
</dbReference>
<dbReference type="HAMAP" id="MF_00480_B">
    <property type="entry name" value="Ribosomal_uS7_B"/>
    <property type="match status" value="1"/>
</dbReference>
<dbReference type="InterPro" id="IPR000235">
    <property type="entry name" value="Ribosomal_uS7"/>
</dbReference>
<dbReference type="InterPro" id="IPR005717">
    <property type="entry name" value="Ribosomal_uS7_bac/org-type"/>
</dbReference>
<dbReference type="InterPro" id="IPR020606">
    <property type="entry name" value="Ribosomal_uS7_CS"/>
</dbReference>
<dbReference type="InterPro" id="IPR023798">
    <property type="entry name" value="Ribosomal_uS7_dom"/>
</dbReference>
<dbReference type="InterPro" id="IPR036823">
    <property type="entry name" value="Ribosomal_uS7_dom_sf"/>
</dbReference>
<dbReference type="NCBIfam" id="TIGR01029">
    <property type="entry name" value="rpsG_bact"/>
    <property type="match status" value="1"/>
</dbReference>
<dbReference type="PANTHER" id="PTHR11205">
    <property type="entry name" value="RIBOSOMAL PROTEIN S7"/>
    <property type="match status" value="1"/>
</dbReference>
<dbReference type="Pfam" id="PF00177">
    <property type="entry name" value="Ribosomal_S7"/>
    <property type="match status" value="1"/>
</dbReference>
<dbReference type="PIRSF" id="PIRSF002122">
    <property type="entry name" value="RPS7p_RPS7a_RPS5e_RPS7o"/>
    <property type="match status" value="1"/>
</dbReference>
<dbReference type="SUPFAM" id="SSF47973">
    <property type="entry name" value="Ribosomal protein S7"/>
    <property type="match status" value="1"/>
</dbReference>
<dbReference type="PROSITE" id="PS00052">
    <property type="entry name" value="RIBOSOMAL_S7"/>
    <property type="match status" value="1"/>
</dbReference>
<accession>A8FKR6</accession>
<comment type="function">
    <text evidence="1">One of the primary rRNA binding proteins, it binds directly to 16S rRNA where it nucleates assembly of the head domain of the 30S subunit. Is located at the subunit interface close to the decoding center, probably blocks exit of the E-site tRNA.</text>
</comment>
<comment type="subunit">
    <text evidence="1">Part of the 30S ribosomal subunit. Contacts proteins S9 and S11.</text>
</comment>
<comment type="similarity">
    <text evidence="1">Belongs to the universal ribosomal protein uS7 family.</text>
</comment>
<gene>
    <name evidence="1" type="primary">rpsG</name>
    <name type="ordered locus">C8J_0454</name>
</gene>
<keyword id="KW-0687">Ribonucleoprotein</keyword>
<keyword id="KW-0689">Ribosomal protein</keyword>
<keyword id="KW-0694">RNA-binding</keyword>
<keyword id="KW-0699">rRNA-binding</keyword>
<keyword id="KW-0820">tRNA-binding</keyword>
<name>RS7_CAMJ8</name>
<proteinExistence type="inferred from homology"/>
<reference key="1">
    <citation type="journal article" date="2007" name="J. Bacteriol.">
        <title>The complete genome sequence of Campylobacter jejuni strain 81116 (NCTC11828).</title>
        <authorList>
            <person name="Pearson B.M."/>
            <person name="Gaskin D.J.H."/>
            <person name="Segers R.P.A.M."/>
            <person name="Wells J.M."/>
            <person name="Nuijten P.J.M."/>
            <person name="van Vliet A.H.M."/>
        </authorList>
    </citation>
    <scope>NUCLEOTIDE SEQUENCE [LARGE SCALE GENOMIC DNA]</scope>
    <source>
        <strain>81116 / NCTC 11828</strain>
    </source>
</reference>
<protein>
    <recommendedName>
        <fullName evidence="1">Small ribosomal subunit protein uS7</fullName>
    </recommendedName>
    <alternativeName>
        <fullName evidence="2">30S ribosomal protein S7</fullName>
    </alternativeName>
</protein>
<sequence length="156" mass="17692">MRRRKAPVREVLPDPIYGNKVITKFINSLMYDGKKSTATTIMYGALEAIDKKGGEKKGIDIFNDAIENIKPLLEVKSRRVGGATYQVPVEVRPARQQALAIRWIISFARKRSERTMIDKLAAELLDAANSKGASFKKKEDTYKMAEANKAFAHYRW</sequence>
<organism>
    <name type="scientific">Campylobacter jejuni subsp. jejuni serotype O:6 (strain 81116 / NCTC 11828)</name>
    <dbReference type="NCBI Taxonomy" id="407148"/>
    <lineage>
        <taxon>Bacteria</taxon>
        <taxon>Pseudomonadati</taxon>
        <taxon>Campylobacterota</taxon>
        <taxon>Epsilonproteobacteria</taxon>
        <taxon>Campylobacterales</taxon>
        <taxon>Campylobacteraceae</taxon>
        <taxon>Campylobacter</taxon>
    </lineage>
</organism>
<feature type="chain" id="PRO_1000072404" description="Small ribosomal subunit protein uS7">
    <location>
        <begin position="1"/>
        <end position="156"/>
    </location>
</feature>